<protein>
    <recommendedName>
        <fullName evidence="1">Anti-adapter protein IraP</fullName>
    </recommendedName>
</protein>
<keyword id="KW-0175">Coiled coil</keyword>
<keyword id="KW-0963">Cytoplasm</keyword>
<keyword id="KW-0346">Stress response</keyword>
<accession>B5Z2T4</accession>
<comment type="function">
    <text evidence="1">Inhibits RpoS proteolysis by regulating RssB activity, thereby increasing the stability of the sigma stress factor RpoS especially during phosphate starvation, but also in stationary phase and during nitrogen starvation. Its effect on RpoS stability is due to its interaction with RssB, which probably blocks the interaction of RssB with RpoS, and the consequent delivery of the RssB-RpoS complex to the ClpXP protein degradation pathway.</text>
</comment>
<comment type="subunit">
    <text evidence="1">Interacts with RssB.</text>
</comment>
<comment type="subcellular location">
    <subcellularLocation>
        <location evidence="1">Cytoplasm</location>
    </subcellularLocation>
</comment>
<comment type="similarity">
    <text evidence="1">Belongs to the IraP family.</text>
</comment>
<sequence>MKNLIAELLFKLAQKEEESKELCAQVEALEIIVTAMLRNMAQNDQQRLIDQVEGALYEVKPDASIPDDDTELLRDYVKKLLKHPRQ</sequence>
<evidence type="ECO:0000255" key="1">
    <source>
        <dbReference type="HAMAP-Rule" id="MF_01198"/>
    </source>
</evidence>
<reference key="1">
    <citation type="journal article" date="2011" name="Proc. Natl. Acad. Sci. U.S.A.">
        <title>Genomic anatomy of Escherichia coli O157:H7 outbreaks.</title>
        <authorList>
            <person name="Eppinger M."/>
            <person name="Mammel M.K."/>
            <person name="Leclerc J.E."/>
            <person name="Ravel J."/>
            <person name="Cebula T.A."/>
        </authorList>
    </citation>
    <scope>NUCLEOTIDE SEQUENCE [LARGE SCALE GENOMIC DNA]</scope>
    <source>
        <strain>EC4115 / EHEC</strain>
    </source>
</reference>
<name>IRAP_ECO5E</name>
<proteinExistence type="inferred from homology"/>
<feature type="chain" id="PRO_1000138483" description="Anti-adapter protein IraP">
    <location>
        <begin position="1"/>
        <end position="86"/>
    </location>
</feature>
<feature type="coiled-coil region" evidence="1">
    <location>
        <begin position="1"/>
        <end position="36"/>
    </location>
</feature>
<organism>
    <name type="scientific">Escherichia coli O157:H7 (strain EC4115 / EHEC)</name>
    <dbReference type="NCBI Taxonomy" id="444450"/>
    <lineage>
        <taxon>Bacteria</taxon>
        <taxon>Pseudomonadati</taxon>
        <taxon>Pseudomonadota</taxon>
        <taxon>Gammaproteobacteria</taxon>
        <taxon>Enterobacterales</taxon>
        <taxon>Enterobacteriaceae</taxon>
        <taxon>Escherichia</taxon>
    </lineage>
</organism>
<gene>
    <name evidence="1" type="primary">iraP</name>
    <name type="ordered locus">ECH74115_0456</name>
</gene>
<dbReference type="EMBL" id="CP001164">
    <property type="protein sequence ID" value="ACI39133.1"/>
    <property type="molecule type" value="Genomic_DNA"/>
</dbReference>
<dbReference type="RefSeq" id="WP_000792970.1">
    <property type="nucleotide sequence ID" value="NC_011353.1"/>
</dbReference>
<dbReference type="SMR" id="B5Z2T4"/>
<dbReference type="GeneID" id="93777080"/>
<dbReference type="KEGG" id="ecf:ECH74115_0456"/>
<dbReference type="HOGENOM" id="CLU_169517_0_0_6"/>
<dbReference type="GO" id="GO:0005737">
    <property type="term" value="C:cytoplasm"/>
    <property type="evidence" value="ECO:0007669"/>
    <property type="project" value="UniProtKB-SubCell"/>
</dbReference>
<dbReference type="GO" id="GO:0009267">
    <property type="term" value="P:cellular response to starvation"/>
    <property type="evidence" value="ECO:0007669"/>
    <property type="project" value="UniProtKB-UniRule"/>
</dbReference>
<dbReference type="HAMAP" id="MF_01198">
    <property type="entry name" value="Anti_adapt_IraP"/>
    <property type="match status" value="1"/>
</dbReference>
<dbReference type="InterPro" id="IPR019732">
    <property type="entry name" value="SigmaS_Anti-adapt_IraP"/>
</dbReference>
<dbReference type="NCBIfam" id="NF007598">
    <property type="entry name" value="PRK10244.1"/>
    <property type="match status" value="1"/>
</dbReference>
<dbReference type="Pfam" id="PF10796">
    <property type="entry name" value="Anti-adapt_IraP"/>
    <property type="match status" value="1"/>
</dbReference>